<sequence length="263" mass="28825">MLHITPLAAFNDNYIWVFQSQQNTGAESSGIYVVDPGDGQVVIDYLIQTGQALLGILITHHHHDHTGGIEQLIRRFGAQIAVYGPQSENIIGVNHPIVANGDISLTNAGLNAKVIQLPGHTLGHIAYLIEDVLFCGDTLFSAGCGRIFEGSAEQMYQSLSELGQLPDNTKVCCAHEYTIANLAFANRVEPNNAALIDYTKKAQALRAQNLPTLPSSIGQEKAINPFLRSDSEEICQSLSIQFQQPINNPLQSFSLLRQWKDNF</sequence>
<evidence type="ECO:0000255" key="1">
    <source>
        <dbReference type="HAMAP-Rule" id="MF_01374"/>
    </source>
</evidence>
<proteinExistence type="inferred from homology"/>
<comment type="function">
    <text evidence="1">Thiolesterase that catalyzes the hydrolysis of S-D-lactoyl-glutathione to form glutathione and D-lactic acid.</text>
</comment>
<comment type="catalytic activity">
    <reaction evidence="1">
        <text>an S-(2-hydroxyacyl)glutathione + H2O = a 2-hydroxy carboxylate + glutathione + H(+)</text>
        <dbReference type="Rhea" id="RHEA:21864"/>
        <dbReference type="ChEBI" id="CHEBI:15377"/>
        <dbReference type="ChEBI" id="CHEBI:15378"/>
        <dbReference type="ChEBI" id="CHEBI:57925"/>
        <dbReference type="ChEBI" id="CHEBI:58896"/>
        <dbReference type="ChEBI" id="CHEBI:71261"/>
        <dbReference type="EC" id="3.1.2.6"/>
    </reaction>
</comment>
<comment type="cofactor">
    <cofactor evidence="1">
        <name>Zn(2+)</name>
        <dbReference type="ChEBI" id="CHEBI:29105"/>
    </cofactor>
    <text evidence="1">Binds 2 Zn(2+) ions per subunit.</text>
</comment>
<comment type="pathway">
    <text evidence="1">Secondary metabolite metabolism; methylglyoxal degradation; (R)-lactate from methylglyoxal: step 2/2.</text>
</comment>
<comment type="subunit">
    <text evidence="1">Monomer.</text>
</comment>
<comment type="similarity">
    <text evidence="1">Belongs to the metallo-beta-lactamase superfamily. Glyoxalase II family.</text>
</comment>
<dbReference type="EC" id="3.1.2.6" evidence="1"/>
<dbReference type="EMBL" id="CP000851">
    <property type="protein sequence ID" value="ABV87726.1"/>
    <property type="molecule type" value="Genomic_DNA"/>
</dbReference>
<dbReference type="RefSeq" id="WP_012155640.1">
    <property type="nucleotide sequence ID" value="NC_009901.1"/>
</dbReference>
<dbReference type="SMR" id="A8H589"/>
<dbReference type="STRING" id="398579.Spea_2406"/>
<dbReference type="KEGG" id="spl:Spea_2406"/>
<dbReference type="eggNOG" id="COG0491">
    <property type="taxonomic scope" value="Bacteria"/>
</dbReference>
<dbReference type="HOGENOM" id="CLU_030571_4_1_6"/>
<dbReference type="OrthoDB" id="9802248at2"/>
<dbReference type="UniPathway" id="UPA00619">
    <property type="reaction ID" value="UER00676"/>
</dbReference>
<dbReference type="Proteomes" id="UP000002608">
    <property type="component" value="Chromosome"/>
</dbReference>
<dbReference type="GO" id="GO:0004416">
    <property type="term" value="F:hydroxyacylglutathione hydrolase activity"/>
    <property type="evidence" value="ECO:0007669"/>
    <property type="project" value="UniProtKB-UniRule"/>
</dbReference>
<dbReference type="GO" id="GO:0046872">
    <property type="term" value="F:metal ion binding"/>
    <property type="evidence" value="ECO:0007669"/>
    <property type="project" value="UniProtKB-KW"/>
</dbReference>
<dbReference type="GO" id="GO:0019243">
    <property type="term" value="P:methylglyoxal catabolic process to D-lactate via S-lactoyl-glutathione"/>
    <property type="evidence" value="ECO:0007669"/>
    <property type="project" value="InterPro"/>
</dbReference>
<dbReference type="CDD" id="cd07723">
    <property type="entry name" value="hydroxyacylglutathione_hydrolase_MBL-fold"/>
    <property type="match status" value="1"/>
</dbReference>
<dbReference type="Gene3D" id="3.60.15.10">
    <property type="entry name" value="Ribonuclease Z/Hydroxyacylglutathione hydrolase-like"/>
    <property type="match status" value="1"/>
</dbReference>
<dbReference type="HAMAP" id="MF_01374">
    <property type="entry name" value="Glyoxalase_2"/>
    <property type="match status" value="1"/>
</dbReference>
<dbReference type="InterPro" id="IPR035680">
    <property type="entry name" value="Clx_II_MBL"/>
</dbReference>
<dbReference type="InterPro" id="IPR050110">
    <property type="entry name" value="Glyoxalase_II_hydrolase"/>
</dbReference>
<dbReference type="InterPro" id="IPR032282">
    <property type="entry name" value="HAGH_C"/>
</dbReference>
<dbReference type="InterPro" id="IPR017782">
    <property type="entry name" value="Hydroxyacylglutathione_Hdrlase"/>
</dbReference>
<dbReference type="InterPro" id="IPR001279">
    <property type="entry name" value="Metallo-B-lactamas"/>
</dbReference>
<dbReference type="InterPro" id="IPR036866">
    <property type="entry name" value="RibonucZ/Hydroxyglut_hydro"/>
</dbReference>
<dbReference type="NCBIfam" id="TIGR03413">
    <property type="entry name" value="GSH_gloB"/>
    <property type="match status" value="1"/>
</dbReference>
<dbReference type="PANTHER" id="PTHR43705">
    <property type="entry name" value="HYDROXYACYLGLUTATHIONE HYDROLASE"/>
    <property type="match status" value="1"/>
</dbReference>
<dbReference type="PANTHER" id="PTHR43705:SF1">
    <property type="entry name" value="HYDROXYACYLGLUTATHIONE HYDROLASE GLOB"/>
    <property type="match status" value="1"/>
</dbReference>
<dbReference type="Pfam" id="PF16123">
    <property type="entry name" value="HAGH_C"/>
    <property type="match status" value="1"/>
</dbReference>
<dbReference type="Pfam" id="PF00753">
    <property type="entry name" value="Lactamase_B"/>
    <property type="match status" value="1"/>
</dbReference>
<dbReference type="PIRSF" id="PIRSF005457">
    <property type="entry name" value="Glx"/>
    <property type="match status" value="1"/>
</dbReference>
<dbReference type="SMART" id="SM00849">
    <property type="entry name" value="Lactamase_B"/>
    <property type="match status" value="1"/>
</dbReference>
<dbReference type="SUPFAM" id="SSF56281">
    <property type="entry name" value="Metallo-hydrolase/oxidoreductase"/>
    <property type="match status" value="1"/>
</dbReference>
<gene>
    <name evidence="1" type="primary">gloB</name>
    <name type="ordered locus">Spea_2406</name>
</gene>
<name>GLO2_SHEPA</name>
<keyword id="KW-0378">Hydrolase</keyword>
<keyword id="KW-0479">Metal-binding</keyword>
<keyword id="KW-1185">Reference proteome</keyword>
<keyword id="KW-0862">Zinc</keyword>
<protein>
    <recommendedName>
        <fullName evidence="1">Hydroxyacylglutathione hydrolase</fullName>
        <ecNumber evidence="1">3.1.2.6</ecNumber>
    </recommendedName>
    <alternativeName>
        <fullName evidence="1">Glyoxalase II</fullName>
        <shortName evidence="1">Glx II</shortName>
    </alternativeName>
</protein>
<reference key="1">
    <citation type="submission" date="2007-10" db="EMBL/GenBank/DDBJ databases">
        <title>Complete sequence of Shewanella pealeana ATCC 700345.</title>
        <authorList>
            <consortium name="US DOE Joint Genome Institute"/>
            <person name="Copeland A."/>
            <person name="Lucas S."/>
            <person name="Lapidus A."/>
            <person name="Barry K."/>
            <person name="Glavina del Rio T."/>
            <person name="Dalin E."/>
            <person name="Tice H."/>
            <person name="Pitluck S."/>
            <person name="Chertkov O."/>
            <person name="Brettin T."/>
            <person name="Bruce D."/>
            <person name="Detter J.C."/>
            <person name="Han C."/>
            <person name="Schmutz J."/>
            <person name="Larimer F."/>
            <person name="Land M."/>
            <person name="Hauser L."/>
            <person name="Kyrpides N."/>
            <person name="Kim E."/>
            <person name="Zhao J.-S.Z."/>
            <person name="Manno D."/>
            <person name="Hawari J."/>
            <person name="Richardson P."/>
        </authorList>
    </citation>
    <scope>NUCLEOTIDE SEQUENCE [LARGE SCALE GENOMIC DNA]</scope>
    <source>
        <strain>ATCC 700345 / ANG-SQ1</strain>
    </source>
</reference>
<organism>
    <name type="scientific">Shewanella pealeana (strain ATCC 700345 / ANG-SQ1)</name>
    <dbReference type="NCBI Taxonomy" id="398579"/>
    <lineage>
        <taxon>Bacteria</taxon>
        <taxon>Pseudomonadati</taxon>
        <taxon>Pseudomonadota</taxon>
        <taxon>Gammaproteobacteria</taxon>
        <taxon>Alteromonadales</taxon>
        <taxon>Shewanellaceae</taxon>
        <taxon>Shewanella</taxon>
    </lineage>
</organism>
<feature type="chain" id="PRO_1000144810" description="Hydroxyacylglutathione hydrolase">
    <location>
        <begin position="1"/>
        <end position="263"/>
    </location>
</feature>
<feature type="binding site" evidence="1">
    <location>
        <position position="60"/>
    </location>
    <ligand>
        <name>Zn(2+)</name>
        <dbReference type="ChEBI" id="CHEBI:29105"/>
        <label>1</label>
    </ligand>
</feature>
<feature type="binding site" evidence="1">
    <location>
        <position position="62"/>
    </location>
    <ligand>
        <name>Zn(2+)</name>
        <dbReference type="ChEBI" id="CHEBI:29105"/>
        <label>1</label>
    </ligand>
</feature>
<feature type="binding site" evidence="1">
    <location>
        <position position="64"/>
    </location>
    <ligand>
        <name>Zn(2+)</name>
        <dbReference type="ChEBI" id="CHEBI:29105"/>
        <label>2</label>
    </ligand>
</feature>
<feature type="binding site" evidence="1">
    <location>
        <position position="65"/>
    </location>
    <ligand>
        <name>Zn(2+)</name>
        <dbReference type="ChEBI" id="CHEBI:29105"/>
        <label>2</label>
    </ligand>
</feature>
<feature type="binding site" evidence="1">
    <location>
        <position position="120"/>
    </location>
    <ligand>
        <name>Zn(2+)</name>
        <dbReference type="ChEBI" id="CHEBI:29105"/>
        <label>1</label>
    </ligand>
</feature>
<feature type="binding site" evidence="1">
    <location>
        <position position="137"/>
    </location>
    <ligand>
        <name>Zn(2+)</name>
        <dbReference type="ChEBI" id="CHEBI:29105"/>
        <label>1</label>
    </ligand>
</feature>
<feature type="binding site" evidence="1">
    <location>
        <position position="137"/>
    </location>
    <ligand>
        <name>Zn(2+)</name>
        <dbReference type="ChEBI" id="CHEBI:29105"/>
        <label>2</label>
    </ligand>
</feature>
<feature type="binding site" evidence="1">
    <location>
        <position position="175"/>
    </location>
    <ligand>
        <name>Zn(2+)</name>
        <dbReference type="ChEBI" id="CHEBI:29105"/>
        <label>2</label>
    </ligand>
</feature>
<accession>A8H589</accession>